<organism>
    <name type="scientific">Escherichia coli (strain K12)</name>
    <dbReference type="NCBI Taxonomy" id="83333"/>
    <lineage>
        <taxon>Bacteria</taxon>
        <taxon>Pseudomonadati</taxon>
        <taxon>Pseudomonadota</taxon>
        <taxon>Gammaproteobacteria</taxon>
        <taxon>Enterobacterales</taxon>
        <taxon>Enterobacteriaceae</taxon>
        <taxon>Escherichia</taxon>
    </lineage>
</organism>
<evidence type="ECO:0000269" key="1">
    <source>
    </source>
</evidence>
<evidence type="ECO:0000303" key="2">
    <source>
    </source>
</evidence>
<evidence type="ECO:0000305" key="3"/>
<evidence type="ECO:0000312" key="4">
    <source>
        <dbReference type="EMBL" id="AAC76120.2"/>
    </source>
</evidence>
<keyword id="KW-0378">Hydrolase</keyword>
<keyword id="KW-0546">Nucleotide metabolism</keyword>
<keyword id="KW-0547">Nucleotide-binding</keyword>
<keyword id="KW-1185">Reference proteome</keyword>
<protein>
    <recommendedName>
        <fullName evidence="2">UTP pyrophosphatase</fullName>
        <ecNumber evidence="1">3.6.1.-</ecNumber>
    </recommendedName>
</protein>
<feature type="chain" id="PRO_0000169424" description="UTP pyrophosphatase">
    <location>
        <begin position="1"/>
        <end position="167"/>
    </location>
</feature>
<sequence>MSNLTYLQGYPEQLLSQVRTLINEQRLGDVLAKRYPGTHDYATDKALWQYTQDLKNQFLRNAPPINKVMYDNKIHVLKNALGLHTAVSRVQGGKLKAKVEIRVATVFRNAPEPFLRMIVVHELAHLKEKEHNKAFYQLCCHMEPQYHQLEFDTRLWLTQLSLGQNKI</sequence>
<reference key="1">
    <citation type="journal article" date="1997" name="Science">
        <title>The complete genome sequence of Escherichia coli K-12.</title>
        <authorList>
            <person name="Blattner F.R."/>
            <person name="Plunkett G. III"/>
            <person name="Bloch C.A."/>
            <person name="Perna N.T."/>
            <person name="Burland V."/>
            <person name="Riley M."/>
            <person name="Collado-Vides J."/>
            <person name="Glasner J.D."/>
            <person name="Rode C.K."/>
            <person name="Mayhew G.F."/>
            <person name="Gregor J."/>
            <person name="Davis N.W."/>
            <person name="Kirkpatrick H.A."/>
            <person name="Goeden M.A."/>
            <person name="Rose D.J."/>
            <person name="Mau B."/>
            <person name="Shao Y."/>
        </authorList>
    </citation>
    <scope>NUCLEOTIDE SEQUENCE [LARGE SCALE GENOMIC DNA]</scope>
    <source>
        <strain>K12 / MG1655 / ATCC 47076</strain>
    </source>
</reference>
<reference key="2">
    <citation type="journal article" date="2006" name="Mol. Syst. Biol.">
        <title>Highly accurate genome sequences of Escherichia coli K-12 strains MG1655 and W3110.</title>
        <authorList>
            <person name="Hayashi K."/>
            <person name="Morooka N."/>
            <person name="Yamamoto Y."/>
            <person name="Fujita K."/>
            <person name="Isono K."/>
            <person name="Choi S."/>
            <person name="Ohtsubo E."/>
            <person name="Baba T."/>
            <person name="Wanner B.L."/>
            <person name="Mori H."/>
            <person name="Horiuchi T."/>
        </authorList>
    </citation>
    <scope>NUCLEOTIDE SEQUENCE [LARGE SCALE GENOMIC DNA]</scope>
    <source>
        <strain>K12 / W3110 / ATCC 27325 / DSM 5911</strain>
    </source>
</reference>
<reference key="3">
    <citation type="journal article" date="2017" name="Nat. Methods">
        <title>Nontargeted in vitro metabolomics for high-throughput identification of novel enzymes in Escherichia coli.</title>
        <authorList>
            <person name="Sevin D.C."/>
            <person name="Fuhrer T."/>
            <person name="Zamboni N."/>
            <person name="Sauer U."/>
        </authorList>
    </citation>
    <scope>FUNCTION</scope>
    <scope>CATALYTIC ACTIVITY</scope>
    <source>
        <strain>K12</strain>
    </source>
</reference>
<name>UTPP_ECOLI</name>
<comment type="function">
    <text evidence="1">Specifically catalyzes the hydrolysis of UTP to UMP and diphosphate in vitro, albeit at apparently slow rate. Shows no activity towards ATP, GTP, CTP, dTTP and ITP as substrates.</text>
</comment>
<comment type="catalytic activity">
    <reaction evidence="1">
        <text>UTP + H2O = UMP + diphosphate + H(+)</text>
        <dbReference type="Rhea" id="RHEA:29395"/>
        <dbReference type="ChEBI" id="CHEBI:15377"/>
        <dbReference type="ChEBI" id="CHEBI:15378"/>
        <dbReference type="ChEBI" id="CHEBI:33019"/>
        <dbReference type="ChEBI" id="CHEBI:46398"/>
        <dbReference type="ChEBI" id="CHEBI:57865"/>
    </reaction>
</comment>
<comment type="sequence caution" evidence="3">
    <conflict type="erroneous initiation">
        <sequence resource="EMBL-CDS" id="AAA57886"/>
    </conflict>
    <text>Extended N-terminus.</text>
</comment>
<dbReference type="EC" id="3.6.1.-" evidence="1"/>
<dbReference type="EMBL" id="U18997">
    <property type="protein sequence ID" value="AAA57886.1"/>
    <property type="status" value="ALT_INIT"/>
    <property type="molecule type" value="Genomic_DNA"/>
</dbReference>
<dbReference type="EMBL" id="U00096">
    <property type="protein sequence ID" value="AAC76120.2"/>
    <property type="molecule type" value="Genomic_DNA"/>
</dbReference>
<dbReference type="EMBL" id="AP009048">
    <property type="protein sequence ID" value="BAE77135.1"/>
    <property type="molecule type" value="Genomic_DNA"/>
</dbReference>
<dbReference type="PIR" id="B65097">
    <property type="entry name" value="B65097"/>
</dbReference>
<dbReference type="RefSeq" id="NP_417556.2">
    <property type="nucleotide sequence ID" value="NC_000913.3"/>
</dbReference>
<dbReference type="RefSeq" id="WP_001333820.1">
    <property type="nucleotide sequence ID" value="NZ_LN832404.1"/>
</dbReference>
<dbReference type="BioGRID" id="4260874">
    <property type="interactions" value="27"/>
</dbReference>
<dbReference type="FunCoup" id="P42597">
    <property type="interactions" value="88"/>
</dbReference>
<dbReference type="STRING" id="511145.b3085"/>
<dbReference type="PaxDb" id="511145-b3085"/>
<dbReference type="EnsemblBacteria" id="AAC76120">
    <property type="protein sequence ID" value="AAC76120"/>
    <property type="gene ID" value="b3085"/>
</dbReference>
<dbReference type="GeneID" id="947650"/>
<dbReference type="KEGG" id="ecj:JW5514"/>
<dbReference type="KEGG" id="eco:b3085"/>
<dbReference type="KEGG" id="ecoc:C3026_16850"/>
<dbReference type="PATRIC" id="fig|511145.12.peg.3180"/>
<dbReference type="EchoBASE" id="EB2586"/>
<dbReference type="eggNOG" id="COG1451">
    <property type="taxonomic scope" value="Bacteria"/>
</dbReference>
<dbReference type="HOGENOM" id="CLU_101303_0_0_6"/>
<dbReference type="InParanoid" id="P42597"/>
<dbReference type="OMA" id="LCCYMEP"/>
<dbReference type="OrthoDB" id="9000630at2"/>
<dbReference type="PhylomeDB" id="P42597"/>
<dbReference type="BioCyc" id="EcoCyc:G7604-MONOMER"/>
<dbReference type="PRO" id="PR:P42597"/>
<dbReference type="Proteomes" id="UP000000625">
    <property type="component" value="Chromosome"/>
</dbReference>
<dbReference type="GO" id="GO:0000166">
    <property type="term" value="F:nucleotide binding"/>
    <property type="evidence" value="ECO:0007669"/>
    <property type="project" value="UniProtKB-KW"/>
</dbReference>
<dbReference type="GO" id="GO:0036221">
    <property type="term" value="F:UTP diphosphatase activity"/>
    <property type="evidence" value="ECO:0007669"/>
    <property type="project" value="RHEA"/>
</dbReference>
<dbReference type="GO" id="GO:0009117">
    <property type="term" value="P:nucleotide metabolic process"/>
    <property type="evidence" value="ECO:0007669"/>
    <property type="project" value="UniProtKB-KW"/>
</dbReference>
<dbReference type="CDD" id="cd07344">
    <property type="entry name" value="M48_yhfN_like"/>
    <property type="match status" value="1"/>
</dbReference>
<dbReference type="Gene3D" id="3.30.2010.10">
    <property type="entry name" value="Metalloproteases ('zincins'), catalytic domain"/>
    <property type="match status" value="1"/>
</dbReference>
<dbReference type="InterPro" id="IPR053136">
    <property type="entry name" value="UTP_pyrophosphatase-like"/>
</dbReference>
<dbReference type="InterPro" id="IPR002725">
    <property type="entry name" value="YgjP-like_metallopeptidase"/>
</dbReference>
<dbReference type="PANTHER" id="PTHR30399">
    <property type="entry name" value="UNCHARACTERIZED PROTEIN YGJP"/>
    <property type="match status" value="1"/>
</dbReference>
<dbReference type="PANTHER" id="PTHR30399:SF1">
    <property type="entry name" value="UTP PYROPHOSPHATASE"/>
    <property type="match status" value="1"/>
</dbReference>
<dbReference type="Pfam" id="PF01863">
    <property type="entry name" value="YgjP-like"/>
    <property type="match status" value="1"/>
</dbReference>
<gene>
    <name evidence="4" type="primary">ygjP</name>
    <name evidence="2" type="synonym">upp</name>
    <name type="ordered locus">b3085</name>
    <name type="ordered locus">JW5514</name>
</gene>
<accession>P42597</accession>
<accession>Q2M9C1</accession>
<proteinExistence type="evidence at protein level"/>